<dbReference type="EMBL" id="AY130766">
    <property type="protein sequence ID" value="AAN06597.1"/>
    <property type="molecule type" value="Genomic_RNA"/>
</dbReference>
<dbReference type="EMBL" id="AH006857">
    <property type="protein sequence ID" value="AAC57066.1"/>
    <property type="molecule type" value="Genomic_RNA"/>
</dbReference>
<dbReference type="SMR" id="Q8BAC3"/>
<dbReference type="Proteomes" id="UP000008430">
    <property type="component" value="Genome"/>
</dbReference>
<dbReference type="GO" id="GO:0042025">
    <property type="term" value="C:host cell nucleus"/>
    <property type="evidence" value="ECO:0007669"/>
    <property type="project" value="UniProtKB-SubCell"/>
</dbReference>
<dbReference type="GO" id="GO:0016020">
    <property type="term" value="C:membrane"/>
    <property type="evidence" value="ECO:0007669"/>
    <property type="project" value="UniProtKB-KW"/>
</dbReference>
<dbReference type="GO" id="GO:0055036">
    <property type="term" value="C:virion membrane"/>
    <property type="evidence" value="ECO:0007669"/>
    <property type="project" value="UniProtKB-SubCell"/>
</dbReference>
<dbReference type="GO" id="GO:0003723">
    <property type="term" value="F:RNA binding"/>
    <property type="evidence" value="ECO:0007669"/>
    <property type="project" value="UniProtKB-UniRule"/>
</dbReference>
<dbReference type="GO" id="GO:0039660">
    <property type="term" value="F:structural constituent of virion"/>
    <property type="evidence" value="ECO:0007669"/>
    <property type="project" value="UniProtKB-UniRule"/>
</dbReference>
<dbReference type="GO" id="GO:0046761">
    <property type="term" value="P:viral budding from plasma membrane"/>
    <property type="evidence" value="ECO:0007669"/>
    <property type="project" value="UniProtKB-UniRule"/>
</dbReference>
<dbReference type="FunFam" id="1.10.10.180:FF:000001">
    <property type="entry name" value="Matrix protein 1"/>
    <property type="match status" value="1"/>
</dbReference>
<dbReference type="FunFam" id="1.20.91.10:FF:000001">
    <property type="entry name" value="Matrix protein 1"/>
    <property type="match status" value="1"/>
</dbReference>
<dbReference type="Gene3D" id="1.10.10.180">
    <property type="match status" value="1"/>
</dbReference>
<dbReference type="Gene3D" id="1.20.91.10">
    <property type="match status" value="1"/>
</dbReference>
<dbReference type="HAMAP" id="MF_04068">
    <property type="entry name" value="INFV_M1"/>
    <property type="match status" value="1"/>
</dbReference>
<dbReference type="InterPro" id="IPR036039">
    <property type="entry name" value="Flu_matrix_M1"/>
</dbReference>
<dbReference type="InterPro" id="IPR013188">
    <property type="entry name" value="Flu_matrix_M1_C"/>
</dbReference>
<dbReference type="InterPro" id="IPR001561">
    <property type="entry name" value="Flu_matrix_M1_N"/>
</dbReference>
<dbReference type="InterPro" id="IPR015423">
    <property type="entry name" value="Flu_matrix_M1_N_sub1"/>
</dbReference>
<dbReference type="InterPro" id="IPR015799">
    <property type="entry name" value="Flu_matrix_M1_N_sub2"/>
</dbReference>
<dbReference type="InterPro" id="IPR037533">
    <property type="entry name" value="INFV_M1"/>
</dbReference>
<dbReference type="Pfam" id="PF00598">
    <property type="entry name" value="Flu_M1"/>
    <property type="match status" value="1"/>
</dbReference>
<dbReference type="Pfam" id="PF08289">
    <property type="entry name" value="Flu_M1_C"/>
    <property type="match status" value="1"/>
</dbReference>
<dbReference type="SMART" id="SM00759">
    <property type="entry name" value="Flu_M1_C"/>
    <property type="match status" value="1"/>
</dbReference>
<dbReference type="SUPFAM" id="SSF48145">
    <property type="entry name" value="Influenza virus matrix protein M1"/>
    <property type="match status" value="1"/>
</dbReference>
<name>M1_I18A0</name>
<keyword id="KW-0025">Alternative splicing</keyword>
<keyword id="KW-1048">Host nucleus</keyword>
<keyword id="KW-0472">Membrane</keyword>
<keyword id="KW-0694">RNA-binding</keyword>
<keyword id="KW-0468">Viral matrix protein</keyword>
<keyword id="KW-0946">Virion</keyword>
<feature type="chain" id="PRO_0000310565" description="Matrix protein 1">
    <location>
        <begin position="1"/>
        <end position="252"/>
    </location>
</feature>
<feature type="region of interest" description="Membrane-binding" evidence="1">
    <location>
        <begin position="1"/>
        <end position="164"/>
    </location>
</feature>
<feature type="region of interest" description="RNP-binding" evidence="1">
    <location>
        <begin position="165"/>
        <end position="252"/>
    </location>
</feature>
<feature type="short sequence motif" description="Nuclear localization signal" evidence="1">
    <location>
        <begin position="101"/>
        <end position="105"/>
    </location>
</feature>
<proteinExistence type="inferred from homology"/>
<gene>
    <name evidence="1" type="primary">M</name>
</gene>
<accession>Q8BAC3</accession>
<accession>O10427</accession>
<protein>
    <recommendedName>
        <fullName evidence="1">Matrix protein 1</fullName>
        <shortName evidence="1">M1</shortName>
    </recommendedName>
</protein>
<organismHost>
    <name type="scientific">Aves</name>
    <dbReference type="NCBI Taxonomy" id="8782"/>
</organismHost>
<organismHost>
    <name type="scientific">Homo sapiens</name>
    <name type="common">Human</name>
    <dbReference type="NCBI Taxonomy" id="9606"/>
</organismHost>
<organismHost>
    <name type="scientific">Sus scrofa</name>
    <name type="common">Pig</name>
    <dbReference type="NCBI Taxonomy" id="9823"/>
</organismHost>
<evidence type="ECO:0000255" key="1">
    <source>
        <dbReference type="HAMAP-Rule" id="MF_04068"/>
    </source>
</evidence>
<organism>
    <name type="scientific">Influenza A virus (strain A/Brevig Mission/1/1918 H1N1)</name>
    <name type="common">Influenza A virus (strain A/South Carolina/1/1918 H1N1)</name>
    <dbReference type="NCBI Taxonomy" id="88776"/>
    <lineage>
        <taxon>Viruses</taxon>
        <taxon>Riboviria</taxon>
        <taxon>Orthornavirae</taxon>
        <taxon>Negarnaviricota</taxon>
        <taxon>Polyploviricotina</taxon>
        <taxon>Insthoviricetes</taxon>
        <taxon>Articulavirales</taxon>
        <taxon>Orthomyxoviridae</taxon>
        <taxon>Alphainfluenzavirus</taxon>
        <taxon>Alphainfluenzavirus influenzae</taxon>
        <taxon>Influenza A virus</taxon>
    </lineage>
</organism>
<sequence length="252" mass="27880">MSLLTEVETYVLSIVPSGPLKAEIAQRLEDVFAGKNTDLEALMEWLKTRPILSPLTKGILGFVFTLTVPSERGLQRRRFVQNALNGNGDPNNMDRAVKLYRKLKREITFHGAKEVALSYSAGALASCMGLIYNRMGTVTTEVAFGLVCATCEQIADSQHRSHRQMVTTTNPLIRHENRMVLASTTAKAMEQMAGSSEQAAEAMEVASQARQMVQAMRTIGTHPSSSAGLKDDLIENLQAYQKRMGVQMQRFK</sequence>
<comment type="function">
    <text evidence="1">Plays critical roles in virus replication, from virus entry and uncoating to assembly and budding of the virus particle. M1 binding to ribonucleocapsids (RNPs) in nucleus seems to inhibit viral transcription. Interaction of viral NEP with M1-RNP is thought to promote nuclear export of the complex, which is targeted to the virion assembly site at the apical plasma membrane in polarized epithelial cells. Interactions with NA and HA may bring M1, a non-raft-associated protein, into lipid rafts. Forms a continuous shell on the inner side of the lipid bilayer in virion, where it binds the RNP. During virus entry into cell, the M2 ion channel acidifies the internal virion core, inducing M1 dissociation from the RNP. M1-free RNPs are transported to the nucleus, where viral transcription and replication can take place.</text>
</comment>
<comment type="function">
    <text evidence="1">Determines the virion's shape: spherical or filamentous. Clinical isolates of influenza are characterized by the presence of significant proportion of filamentous virions, whereas after multiple passage on eggs or cell culture, virions have only spherical morphology. Filamentous virions are thought to be important to infect neighboring cells, and spherical virions more suited to spread through aerosol between hosts organisms.</text>
</comment>
<comment type="subunit">
    <text evidence="1">Homodimer and homomultimer. Interacts with NEP. Binds ribonucleocapsid by both interacting with genomic RNA and NP protein. May interact with HA and NA. Cannot bind NP without genomic RNA.</text>
</comment>
<comment type="subcellular location">
    <subcellularLocation>
        <location evidence="1">Virion membrane</location>
        <topology evidence="1">Peripheral membrane protein</topology>
        <orientation evidence="1">Cytoplasmic side</orientation>
    </subcellularLocation>
    <subcellularLocation>
        <location evidence="1">Host nucleus</location>
    </subcellularLocation>
</comment>
<comment type="alternative products">
    <event type="alternative splicing"/>
    <isoform>
        <id>Q8BAC3-1</id>
        <name>M1</name>
        <sequence type="displayed"/>
    </isoform>
    <isoform>
        <id>Q8BAC4-1</id>
        <name>M2</name>
        <sequence type="external"/>
    </isoform>
    <text>Only the first 9 residues are shared by the 2 isoforms.</text>
</comment>
<comment type="miscellaneous">
    <text>South Carolina isolate has been sequenced from formalid fixed-lung tissues of a 21-year-old male which died in 1918 at Ft. Jackson, SC. Brevig Mission isolate has been sequenced from lung tissues of an Inuit woman buried in the permafrost in a gravesite near Brevig Mission, Alaska. This sample was recovered by John Hultin, retired pathologist.</text>
</comment>
<comment type="miscellaneous">
    <text evidence="1">Most abundant protein in virion. When expressed alone can form virus-like particles in transfected cells.</text>
</comment>
<comment type="similarity">
    <text evidence="1">Belongs to the influenza viruses Matrix protein M1 family.</text>
</comment>
<reference key="1">
    <citation type="journal article" date="2002" name="J. Virol.">
        <title>Characterization of the 1918 'Spanish' influenza virus matrix gene segment.</title>
        <authorList>
            <person name="Reid A.H."/>
            <person name="Fanning T.G."/>
            <person name="Janczewski T.A."/>
            <person name="McCall S."/>
            <person name="Taubenberger J.K."/>
        </authorList>
    </citation>
    <scope>NUCLEOTIDE SEQUENCE [GENOMIC RNA]</scope>
</reference>
<reference key="2">
    <citation type="journal article" date="1997" name="Science">
        <title>Initial genetic characterization of the 1918 'Spanish' influenza virus.</title>
        <authorList>
            <person name="Taubenberger J.K."/>
            <person name="Reid A.H."/>
            <person name="Krafft A.E."/>
            <person name="Bijwaard K.E."/>
            <person name="Fanning T.G."/>
        </authorList>
    </citation>
    <scope>NUCLEOTIDE SEQUENCE [GENOMIC RNA] OF 47-69</scope>
    <source>
        <strain>A/South Carolina/1/18</strain>
    </source>
</reference>